<accession>B5FSN3</accession>
<sequence length="173" mass="18809">MSIILGIDPGSRITGYGVIRQVGRQLTYLGSGCIRTKVDDLPSRLKLIYAGVTEIITQFQPDYFAIEQVFMAKNADSALKLGQARGVAIVAAVNQELPVFEYAARQVKQTVVGIGSAEKSQVQHMVRTLLKLPANPQADAADALAIAITHCHVSQNAMQMSESRLNLARGRMR</sequence>
<name>RUVC_SALDC</name>
<dbReference type="EC" id="3.1.21.10" evidence="1"/>
<dbReference type="EMBL" id="CP001144">
    <property type="protein sequence ID" value="ACH77241.1"/>
    <property type="molecule type" value="Genomic_DNA"/>
</dbReference>
<dbReference type="RefSeq" id="WP_000022510.1">
    <property type="nucleotide sequence ID" value="NC_011205.1"/>
</dbReference>
<dbReference type="SMR" id="B5FSN3"/>
<dbReference type="KEGG" id="sed:SeD_A1349"/>
<dbReference type="HOGENOM" id="CLU_091257_2_1_6"/>
<dbReference type="Proteomes" id="UP000008322">
    <property type="component" value="Chromosome"/>
</dbReference>
<dbReference type="GO" id="GO:0005737">
    <property type="term" value="C:cytoplasm"/>
    <property type="evidence" value="ECO:0007669"/>
    <property type="project" value="UniProtKB-SubCell"/>
</dbReference>
<dbReference type="GO" id="GO:0048476">
    <property type="term" value="C:Holliday junction resolvase complex"/>
    <property type="evidence" value="ECO:0007669"/>
    <property type="project" value="UniProtKB-UniRule"/>
</dbReference>
<dbReference type="GO" id="GO:0008821">
    <property type="term" value="F:crossover junction DNA endonuclease activity"/>
    <property type="evidence" value="ECO:0007669"/>
    <property type="project" value="UniProtKB-UniRule"/>
</dbReference>
<dbReference type="GO" id="GO:0003677">
    <property type="term" value="F:DNA binding"/>
    <property type="evidence" value="ECO:0007669"/>
    <property type="project" value="UniProtKB-KW"/>
</dbReference>
<dbReference type="GO" id="GO:0000287">
    <property type="term" value="F:magnesium ion binding"/>
    <property type="evidence" value="ECO:0007669"/>
    <property type="project" value="UniProtKB-UniRule"/>
</dbReference>
<dbReference type="GO" id="GO:0006310">
    <property type="term" value="P:DNA recombination"/>
    <property type="evidence" value="ECO:0007669"/>
    <property type="project" value="UniProtKB-UniRule"/>
</dbReference>
<dbReference type="GO" id="GO:0006281">
    <property type="term" value="P:DNA repair"/>
    <property type="evidence" value="ECO:0007669"/>
    <property type="project" value="UniProtKB-UniRule"/>
</dbReference>
<dbReference type="CDD" id="cd16962">
    <property type="entry name" value="RuvC"/>
    <property type="match status" value="1"/>
</dbReference>
<dbReference type="FunFam" id="3.30.420.10:FF:000002">
    <property type="entry name" value="Crossover junction endodeoxyribonuclease RuvC"/>
    <property type="match status" value="1"/>
</dbReference>
<dbReference type="Gene3D" id="3.30.420.10">
    <property type="entry name" value="Ribonuclease H-like superfamily/Ribonuclease H"/>
    <property type="match status" value="1"/>
</dbReference>
<dbReference type="HAMAP" id="MF_00034">
    <property type="entry name" value="RuvC"/>
    <property type="match status" value="1"/>
</dbReference>
<dbReference type="InterPro" id="IPR012337">
    <property type="entry name" value="RNaseH-like_sf"/>
</dbReference>
<dbReference type="InterPro" id="IPR036397">
    <property type="entry name" value="RNaseH_sf"/>
</dbReference>
<dbReference type="InterPro" id="IPR020563">
    <property type="entry name" value="X-over_junc_endoDNase_Mg_BS"/>
</dbReference>
<dbReference type="InterPro" id="IPR002176">
    <property type="entry name" value="X-over_junc_endoDNase_RuvC"/>
</dbReference>
<dbReference type="NCBIfam" id="NF000711">
    <property type="entry name" value="PRK00039.2-1"/>
    <property type="match status" value="1"/>
</dbReference>
<dbReference type="NCBIfam" id="TIGR00228">
    <property type="entry name" value="ruvC"/>
    <property type="match status" value="1"/>
</dbReference>
<dbReference type="PANTHER" id="PTHR30194">
    <property type="entry name" value="CROSSOVER JUNCTION ENDODEOXYRIBONUCLEASE RUVC"/>
    <property type="match status" value="1"/>
</dbReference>
<dbReference type="PANTHER" id="PTHR30194:SF3">
    <property type="entry name" value="CROSSOVER JUNCTION ENDODEOXYRIBONUCLEASE RUVC"/>
    <property type="match status" value="1"/>
</dbReference>
<dbReference type="Pfam" id="PF02075">
    <property type="entry name" value="RuvC"/>
    <property type="match status" value="1"/>
</dbReference>
<dbReference type="PRINTS" id="PR00696">
    <property type="entry name" value="RSOLVASERUVC"/>
</dbReference>
<dbReference type="SUPFAM" id="SSF53098">
    <property type="entry name" value="Ribonuclease H-like"/>
    <property type="match status" value="1"/>
</dbReference>
<dbReference type="PROSITE" id="PS01321">
    <property type="entry name" value="RUVC"/>
    <property type="match status" value="1"/>
</dbReference>
<comment type="function">
    <text evidence="1">The RuvA-RuvB-RuvC complex processes Holliday junction (HJ) DNA during genetic recombination and DNA repair. Endonuclease that resolves HJ intermediates. Cleaves cruciform DNA by making single-stranded nicks across the HJ at symmetrical positions within the homologous arms, yielding a 5'-phosphate and a 3'-hydroxyl group; requires a central core of homology in the junction. The consensus cleavage sequence is 5'-(A/T)TT(C/G)-3'. Cleavage occurs on the 3'-side of the TT dinucleotide at the point of strand exchange. HJ branch migration catalyzed by RuvA-RuvB allows RuvC to scan DNA until it finds its consensus sequence, where it cleaves and resolves the cruciform DNA.</text>
</comment>
<comment type="catalytic activity">
    <reaction evidence="1">
        <text>Endonucleolytic cleavage at a junction such as a reciprocal single-stranded crossover between two homologous DNA duplexes (Holliday junction).</text>
        <dbReference type="EC" id="3.1.21.10"/>
    </reaction>
</comment>
<comment type="cofactor">
    <cofactor evidence="1">
        <name>Mg(2+)</name>
        <dbReference type="ChEBI" id="CHEBI:18420"/>
    </cofactor>
    <text evidence="1">Binds 2 Mg(2+) ion per subunit.</text>
</comment>
<comment type="subunit">
    <text evidence="1">Homodimer which binds Holliday junction (HJ) DNA. The HJ becomes 2-fold symmetrical on binding to RuvC with unstacked arms; it has a different conformation from HJ DNA in complex with RuvA. In the full resolvosome a probable DNA-RuvA(4)-RuvB(12)-RuvC(2) complex forms which resolves the HJ.</text>
</comment>
<comment type="subcellular location">
    <subcellularLocation>
        <location evidence="1">Cytoplasm</location>
    </subcellularLocation>
</comment>
<comment type="similarity">
    <text evidence="1">Belongs to the RuvC family.</text>
</comment>
<organism>
    <name type="scientific">Salmonella dublin (strain CT_02021853)</name>
    <dbReference type="NCBI Taxonomy" id="439851"/>
    <lineage>
        <taxon>Bacteria</taxon>
        <taxon>Pseudomonadati</taxon>
        <taxon>Pseudomonadota</taxon>
        <taxon>Gammaproteobacteria</taxon>
        <taxon>Enterobacterales</taxon>
        <taxon>Enterobacteriaceae</taxon>
        <taxon>Salmonella</taxon>
    </lineage>
</organism>
<keyword id="KW-0963">Cytoplasm</keyword>
<keyword id="KW-0227">DNA damage</keyword>
<keyword id="KW-0233">DNA recombination</keyword>
<keyword id="KW-0234">DNA repair</keyword>
<keyword id="KW-0238">DNA-binding</keyword>
<keyword id="KW-0255">Endonuclease</keyword>
<keyword id="KW-0378">Hydrolase</keyword>
<keyword id="KW-0460">Magnesium</keyword>
<keyword id="KW-0479">Metal-binding</keyword>
<keyword id="KW-0540">Nuclease</keyword>
<evidence type="ECO:0000255" key="1">
    <source>
        <dbReference type="HAMAP-Rule" id="MF_00034"/>
    </source>
</evidence>
<protein>
    <recommendedName>
        <fullName evidence="1">Crossover junction endodeoxyribonuclease RuvC</fullName>
        <ecNumber evidence="1">3.1.21.10</ecNumber>
    </recommendedName>
    <alternativeName>
        <fullName evidence="1">Holliday junction nuclease RuvC</fullName>
    </alternativeName>
    <alternativeName>
        <fullName evidence="1">Holliday junction resolvase RuvC</fullName>
    </alternativeName>
</protein>
<gene>
    <name evidence="1" type="primary">ruvC</name>
    <name type="ordered locus">SeD_A1349</name>
</gene>
<feature type="chain" id="PRO_1000090556" description="Crossover junction endodeoxyribonuclease RuvC">
    <location>
        <begin position="1"/>
        <end position="173"/>
    </location>
</feature>
<feature type="active site" evidence="1">
    <location>
        <position position="8"/>
    </location>
</feature>
<feature type="active site" evidence="1">
    <location>
        <position position="67"/>
    </location>
</feature>
<feature type="active site" evidence="1">
    <location>
        <position position="139"/>
    </location>
</feature>
<feature type="binding site" evidence="1">
    <location>
        <position position="8"/>
    </location>
    <ligand>
        <name>Mg(2+)</name>
        <dbReference type="ChEBI" id="CHEBI:18420"/>
        <label>1</label>
    </ligand>
</feature>
<feature type="binding site" evidence="1">
    <location>
        <position position="67"/>
    </location>
    <ligand>
        <name>Mg(2+)</name>
        <dbReference type="ChEBI" id="CHEBI:18420"/>
        <label>2</label>
    </ligand>
</feature>
<feature type="binding site" evidence="1">
    <location>
        <position position="139"/>
    </location>
    <ligand>
        <name>Mg(2+)</name>
        <dbReference type="ChEBI" id="CHEBI:18420"/>
        <label>1</label>
    </ligand>
</feature>
<reference key="1">
    <citation type="journal article" date="2011" name="J. Bacteriol.">
        <title>Comparative genomics of 28 Salmonella enterica isolates: evidence for CRISPR-mediated adaptive sublineage evolution.</title>
        <authorList>
            <person name="Fricke W.F."/>
            <person name="Mammel M.K."/>
            <person name="McDermott P.F."/>
            <person name="Tartera C."/>
            <person name="White D.G."/>
            <person name="Leclerc J.E."/>
            <person name="Ravel J."/>
            <person name="Cebula T.A."/>
        </authorList>
    </citation>
    <scope>NUCLEOTIDE SEQUENCE [LARGE SCALE GENOMIC DNA]</scope>
    <source>
        <strain>CT_02021853</strain>
    </source>
</reference>
<proteinExistence type="inferred from homology"/>